<gene>
    <name type="primary">L1td1</name>
    <name type="synonym">Ecat11</name>
</gene>
<organism>
    <name type="scientific">Mus musculus</name>
    <name type="common">Mouse</name>
    <dbReference type="NCBI Taxonomy" id="10090"/>
    <lineage>
        <taxon>Eukaryota</taxon>
        <taxon>Metazoa</taxon>
        <taxon>Chordata</taxon>
        <taxon>Craniata</taxon>
        <taxon>Vertebrata</taxon>
        <taxon>Euteleostomi</taxon>
        <taxon>Mammalia</taxon>
        <taxon>Eutheria</taxon>
        <taxon>Euarchontoglires</taxon>
        <taxon>Glires</taxon>
        <taxon>Rodentia</taxon>
        <taxon>Myomorpha</taxon>
        <taxon>Muroidea</taxon>
        <taxon>Muridae</taxon>
        <taxon>Murinae</taxon>
        <taxon>Mus</taxon>
        <taxon>Mus</taxon>
    </lineage>
</organism>
<name>LITD1_MOUSE</name>
<evidence type="ECO:0000250" key="1">
    <source>
        <dbReference type="UniProtKB" id="Q5T7N2"/>
    </source>
</evidence>
<evidence type="ECO:0000256" key="2">
    <source>
        <dbReference type="SAM" id="MobiDB-lite"/>
    </source>
</evidence>
<evidence type="ECO:0000305" key="3"/>
<proteinExistence type="evidence at transcript level"/>
<accession>Q587J6</accession>
<accession>Q3UKY3</accession>
<reference key="1">
    <citation type="submission" date="2005-04" db="EMBL/GenBank/DDBJ databases">
        <authorList>
            <person name="Yamanaka S."/>
        </authorList>
    </citation>
    <scope>NUCLEOTIDE SEQUENCE [MRNA]</scope>
</reference>
<reference key="2">
    <citation type="journal article" date="2005" name="Science">
        <title>The transcriptional landscape of the mammalian genome.</title>
        <authorList>
            <person name="Carninci P."/>
            <person name="Kasukawa T."/>
            <person name="Katayama S."/>
            <person name="Gough J."/>
            <person name="Frith M.C."/>
            <person name="Maeda N."/>
            <person name="Oyama R."/>
            <person name="Ravasi T."/>
            <person name="Lenhard B."/>
            <person name="Wells C."/>
            <person name="Kodzius R."/>
            <person name="Shimokawa K."/>
            <person name="Bajic V.B."/>
            <person name="Brenner S.E."/>
            <person name="Batalov S."/>
            <person name="Forrest A.R."/>
            <person name="Zavolan M."/>
            <person name="Davis M.J."/>
            <person name="Wilming L.G."/>
            <person name="Aidinis V."/>
            <person name="Allen J.E."/>
            <person name="Ambesi-Impiombato A."/>
            <person name="Apweiler R."/>
            <person name="Aturaliya R.N."/>
            <person name="Bailey T.L."/>
            <person name="Bansal M."/>
            <person name="Baxter L."/>
            <person name="Beisel K.W."/>
            <person name="Bersano T."/>
            <person name="Bono H."/>
            <person name="Chalk A.M."/>
            <person name="Chiu K.P."/>
            <person name="Choudhary V."/>
            <person name="Christoffels A."/>
            <person name="Clutterbuck D.R."/>
            <person name="Crowe M.L."/>
            <person name="Dalla E."/>
            <person name="Dalrymple B.P."/>
            <person name="de Bono B."/>
            <person name="Della Gatta G."/>
            <person name="di Bernardo D."/>
            <person name="Down T."/>
            <person name="Engstrom P."/>
            <person name="Fagiolini M."/>
            <person name="Faulkner G."/>
            <person name="Fletcher C.F."/>
            <person name="Fukushima T."/>
            <person name="Furuno M."/>
            <person name="Futaki S."/>
            <person name="Gariboldi M."/>
            <person name="Georgii-Hemming P."/>
            <person name="Gingeras T.R."/>
            <person name="Gojobori T."/>
            <person name="Green R.E."/>
            <person name="Gustincich S."/>
            <person name="Harbers M."/>
            <person name="Hayashi Y."/>
            <person name="Hensch T.K."/>
            <person name="Hirokawa N."/>
            <person name="Hill D."/>
            <person name="Huminiecki L."/>
            <person name="Iacono M."/>
            <person name="Ikeo K."/>
            <person name="Iwama A."/>
            <person name="Ishikawa T."/>
            <person name="Jakt M."/>
            <person name="Kanapin A."/>
            <person name="Katoh M."/>
            <person name="Kawasawa Y."/>
            <person name="Kelso J."/>
            <person name="Kitamura H."/>
            <person name="Kitano H."/>
            <person name="Kollias G."/>
            <person name="Krishnan S.P."/>
            <person name="Kruger A."/>
            <person name="Kummerfeld S.K."/>
            <person name="Kurochkin I.V."/>
            <person name="Lareau L.F."/>
            <person name="Lazarevic D."/>
            <person name="Lipovich L."/>
            <person name="Liu J."/>
            <person name="Liuni S."/>
            <person name="McWilliam S."/>
            <person name="Madan Babu M."/>
            <person name="Madera M."/>
            <person name="Marchionni L."/>
            <person name="Matsuda H."/>
            <person name="Matsuzawa S."/>
            <person name="Miki H."/>
            <person name="Mignone F."/>
            <person name="Miyake S."/>
            <person name="Morris K."/>
            <person name="Mottagui-Tabar S."/>
            <person name="Mulder N."/>
            <person name="Nakano N."/>
            <person name="Nakauchi H."/>
            <person name="Ng P."/>
            <person name="Nilsson R."/>
            <person name="Nishiguchi S."/>
            <person name="Nishikawa S."/>
            <person name="Nori F."/>
            <person name="Ohara O."/>
            <person name="Okazaki Y."/>
            <person name="Orlando V."/>
            <person name="Pang K.C."/>
            <person name="Pavan W.J."/>
            <person name="Pavesi G."/>
            <person name="Pesole G."/>
            <person name="Petrovsky N."/>
            <person name="Piazza S."/>
            <person name="Reed J."/>
            <person name="Reid J.F."/>
            <person name="Ring B.Z."/>
            <person name="Ringwald M."/>
            <person name="Rost B."/>
            <person name="Ruan Y."/>
            <person name="Salzberg S.L."/>
            <person name="Sandelin A."/>
            <person name="Schneider C."/>
            <person name="Schoenbach C."/>
            <person name="Sekiguchi K."/>
            <person name="Semple C.A."/>
            <person name="Seno S."/>
            <person name="Sessa L."/>
            <person name="Sheng Y."/>
            <person name="Shibata Y."/>
            <person name="Shimada H."/>
            <person name="Shimada K."/>
            <person name="Silva D."/>
            <person name="Sinclair B."/>
            <person name="Sperling S."/>
            <person name="Stupka E."/>
            <person name="Sugiura K."/>
            <person name="Sultana R."/>
            <person name="Takenaka Y."/>
            <person name="Taki K."/>
            <person name="Tammoja K."/>
            <person name="Tan S.L."/>
            <person name="Tang S."/>
            <person name="Taylor M.S."/>
            <person name="Tegner J."/>
            <person name="Teichmann S.A."/>
            <person name="Ueda H.R."/>
            <person name="van Nimwegen E."/>
            <person name="Verardo R."/>
            <person name="Wei C.L."/>
            <person name="Yagi K."/>
            <person name="Yamanishi H."/>
            <person name="Zabarovsky E."/>
            <person name="Zhu S."/>
            <person name="Zimmer A."/>
            <person name="Hide W."/>
            <person name="Bult C."/>
            <person name="Grimmond S.M."/>
            <person name="Teasdale R.D."/>
            <person name="Liu E.T."/>
            <person name="Brusic V."/>
            <person name="Quackenbush J."/>
            <person name="Wahlestedt C."/>
            <person name="Mattick J.S."/>
            <person name="Hume D.A."/>
            <person name="Kai C."/>
            <person name="Sasaki D."/>
            <person name="Tomaru Y."/>
            <person name="Fukuda S."/>
            <person name="Kanamori-Katayama M."/>
            <person name="Suzuki M."/>
            <person name="Aoki J."/>
            <person name="Arakawa T."/>
            <person name="Iida J."/>
            <person name="Imamura K."/>
            <person name="Itoh M."/>
            <person name="Kato T."/>
            <person name="Kawaji H."/>
            <person name="Kawagashira N."/>
            <person name="Kawashima T."/>
            <person name="Kojima M."/>
            <person name="Kondo S."/>
            <person name="Konno H."/>
            <person name="Nakano K."/>
            <person name="Ninomiya N."/>
            <person name="Nishio T."/>
            <person name="Okada M."/>
            <person name="Plessy C."/>
            <person name="Shibata K."/>
            <person name="Shiraki T."/>
            <person name="Suzuki S."/>
            <person name="Tagami M."/>
            <person name="Waki K."/>
            <person name="Watahiki A."/>
            <person name="Okamura-Oho Y."/>
            <person name="Suzuki H."/>
            <person name="Kawai J."/>
            <person name="Hayashizaki Y."/>
        </authorList>
    </citation>
    <scope>NUCLEOTIDE SEQUENCE [LARGE SCALE MRNA] OF 1-385</scope>
    <source>
        <strain>C57BL/6J</strain>
    </source>
</reference>
<comment type="similarity">
    <text evidence="3">Belongs to the transposase 22 family.</text>
</comment>
<comment type="sequence caution" evidence="3">
    <conflict type="erroneous initiation">
        <sequence resource="EMBL-CDS" id="BAE26668"/>
    </conflict>
</comment>
<keyword id="KW-0597">Phosphoprotein</keyword>
<keyword id="KW-1185">Reference proteome</keyword>
<feature type="chain" id="PRO_0000307218" description="LINE-1 type transposase domain-containing protein 1">
    <location>
        <begin position="1"/>
        <end position="782"/>
    </location>
</feature>
<feature type="region of interest" description="Disordered" evidence="2">
    <location>
        <begin position="1"/>
        <end position="30"/>
    </location>
</feature>
<feature type="region of interest" description="Disordered" evidence="2">
    <location>
        <begin position="90"/>
        <end position="200"/>
    </location>
</feature>
<feature type="region of interest" description="Disordered" evidence="2">
    <location>
        <begin position="338"/>
        <end position="397"/>
    </location>
</feature>
<feature type="compositionally biased region" description="Basic and acidic residues" evidence="2">
    <location>
        <begin position="11"/>
        <end position="27"/>
    </location>
</feature>
<feature type="compositionally biased region" description="Basic and acidic residues" evidence="2">
    <location>
        <begin position="95"/>
        <end position="107"/>
    </location>
</feature>
<feature type="compositionally biased region" description="Basic and acidic residues" evidence="2">
    <location>
        <begin position="143"/>
        <end position="158"/>
    </location>
</feature>
<feature type="compositionally biased region" description="Basic and acidic residues" evidence="2">
    <location>
        <begin position="183"/>
        <end position="194"/>
    </location>
</feature>
<feature type="compositionally biased region" description="Acidic residues" evidence="2">
    <location>
        <begin position="347"/>
        <end position="396"/>
    </location>
</feature>
<feature type="modified residue" description="Phosphoserine" evidence="1">
    <location>
        <position position="136"/>
    </location>
</feature>
<feature type="modified residue" description="Phosphoserine" evidence="1">
    <location>
        <position position="407"/>
    </location>
</feature>
<feature type="modified residue" description="Phosphoserine" evidence="1">
    <location>
        <position position="409"/>
    </location>
</feature>
<feature type="modified residue" description="Phosphoserine" evidence="1">
    <location>
        <position position="442"/>
    </location>
</feature>
<feature type="modified residue" description="Phosphoserine" evidence="1">
    <location>
        <position position="478"/>
    </location>
</feature>
<feature type="modified residue" description="Phosphoserine" evidence="1">
    <location>
        <position position="490"/>
    </location>
</feature>
<feature type="modified residue" description="Phosphoserine" evidence="1">
    <location>
        <position position="559"/>
    </location>
</feature>
<feature type="modified residue" description="Phosphoserine" evidence="1">
    <location>
        <position position="567"/>
    </location>
</feature>
<dbReference type="EMBL" id="AB211064">
    <property type="protein sequence ID" value="BAD95491.1"/>
    <property type="molecule type" value="mRNA"/>
</dbReference>
<dbReference type="EMBL" id="AK145814">
    <property type="protein sequence ID" value="BAE26668.1"/>
    <property type="status" value="ALT_INIT"/>
    <property type="molecule type" value="mRNA"/>
</dbReference>
<dbReference type="CCDS" id="CCDS51235.1"/>
<dbReference type="RefSeq" id="NP_001074671.1">
    <property type="nucleotide sequence ID" value="NM_001081202.1"/>
</dbReference>
<dbReference type="SMR" id="Q587J6"/>
<dbReference type="BioGRID" id="238004">
    <property type="interactions" value="9"/>
</dbReference>
<dbReference type="DIP" id="DIP-59746N"/>
<dbReference type="FunCoup" id="Q587J6">
    <property type="interactions" value="11"/>
</dbReference>
<dbReference type="IntAct" id="Q587J6">
    <property type="interactions" value="1"/>
</dbReference>
<dbReference type="STRING" id="10090.ENSMUSP00000127504"/>
<dbReference type="iPTMnet" id="Q587J6"/>
<dbReference type="PhosphoSitePlus" id="Q587J6"/>
<dbReference type="PaxDb" id="10090-ENSMUSP00000127504"/>
<dbReference type="ProteomicsDB" id="286210"/>
<dbReference type="Antibodypedia" id="33329">
    <property type="antibodies" value="78 antibodies from 25 providers"/>
</dbReference>
<dbReference type="DNASU" id="381591"/>
<dbReference type="Ensembl" id="ENSMUST00000154279.3">
    <property type="protein sequence ID" value="ENSMUSP00000127504.2"/>
    <property type="gene ID" value="ENSMUSG00000087166.10"/>
</dbReference>
<dbReference type="GeneID" id="381591"/>
<dbReference type="KEGG" id="mmu:381591"/>
<dbReference type="UCSC" id="uc008tuj.1">
    <property type="organism name" value="mouse"/>
</dbReference>
<dbReference type="AGR" id="MGI:3578435"/>
<dbReference type="CTD" id="54596"/>
<dbReference type="MGI" id="MGI:3578435">
    <property type="gene designation" value="L1td1"/>
</dbReference>
<dbReference type="VEuPathDB" id="HostDB:ENSMUSG00000087166"/>
<dbReference type="eggNOG" id="ENOG502SRQ0">
    <property type="taxonomic scope" value="Eukaryota"/>
</dbReference>
<dbReference type="GeneTree" id="ENSGT01050000244818"/>
<dbReference type="HOGENOM" id="CLU_336140_0_0_1"/>
<dbReference type="InParanoid" id="Q587J6"/>
<dbReference type="OrthoDB" id="9537802at2759"/>
<dbReference type="PhylomeDB" id="Q587J6"/>
<dbReference type="TreeFam" id="TF351152"/>
<dbReference type="BioGRID-ORCS" id="381591">
    <property type="hits" value="2 hits in 76 CRISPR screens"/>
</dbReference>
<dbReference type="PRO" id="PR:Q587J6"/>
<dbReference type="Proteomes" id="UP000000589">
    <property type="component" value="Chromosome 4"/>
</dbReference>
<dbReference type="RNAct" id="Q587J6">
    <property type="molecule type" value="protein"/>
</dbReference>
<dbReference type="Bgee" id="ENSMUSG00000087166">
    <property type="expression patterns" value="Expressed in yolk sac and 52 other cell types or tissues"/>
</dbReference>
<dbReference type="ExpressionAtlas" id="Q587J6">
    <property type="expression patterns" value="baseline and differential"/>
</dbReference>
<dbReference type="FunFam" id="3.30.70.1820:FF:000002">
    <property type="entry name" value="LINE-1 retrotransposable element ORF1 protein"/>
    <property type="match status" value="1"/>
</dbReference>
<dbReference type="FunFam" id="3.30.250.20:FF:000002">
    <property type="entry name" value="LINE1 type transposase domain containing 1"/>
    <property type="match status" value="2"/>
</dbReference>
<dbReference type="Gene3D" id="3.30.250.20">
    <property type="entry name" value="L1 transposable element, C-terminal domain"/>
    <property type="match status" value="2"/>
</dbReference>
<dbReference type="Gene3D" id="3.30.70.1820">
    <property type="entry name" value="L1 transposable element, RRM domain"/>
    <property type="match status" value="1"/>
</dbReference>
<dbReference type="InterPro" id="IPR042566">
    <property type="entry name" value="L1_C"/>
</dbReference>
<dbReference type="InterPro" id="IPR035300">
    <property type="entry name" value="L1_dsRBD"/>
</dbReference>
<dbReference type="InterPro" id="IPR043636">
    <property type="entry name" value="L1_RRM_dom"/>
</dbReference>
<dbReference type="InterPro" id="IPR004244">
    <property type="entry name" value="Transposase_22"/>
</dbReference>
<dbReference type="PANTHER" id="PTHR11505">
    <property type="entry name" value="L1 TRANSPOSABLE ELEMENT-RELATED"/>
    <property type="match status" value="1"/>
</dbReference>
<dbReference type="Pfam" id="PF17490">
    <property type="entry name" value="Tnp_22_dsRBD"/>
    <property type="match status" value="2"/>
</dbReference>
<dbReference type="Pfam" id="PF02994">
    <property type="entry name" value="Transposase_22"/>
    <property type="match status" value="1"/>
</dbReference>
<sequence length="782" mass="88189">MSGVQSKAARLQKERKEKLSADRERKTATSLCLKHSEVPASMMKQFNALMEMQEVMFAEMRETYKNDIKEMLLKRTAPWVKHLEERIGQQEGDAISERPKPGEKVEELSSGTDEDTENLTVRSKKGKQDKAKPLNSSHVLKSSLERGGEALRGEHGRCGESSSLVDWKNANEKPAREASCQSEENRLKAPKESPPEGGAGATLRLAADFSAATLDVGRQWSQVFRLLKEKELEPELQCSVKLAFKCDGEANVFSDLHSLRQFTSRKPFLRELLKDVFPQNEGGRRNELRERLGKTLGDTKHEARRIASDSLSFLFIKEVEVASPEVKTYKEETLDRKNKGTLKKQEGEEEEISETQGEETSEGETSELGEEEGSESEEEEESSESEEEEESSESAEEIGFISLVVDSESEEEVNRKTASQTKKKETFHGLKELAFSYLVWDSKKKKLVRCQEGGAAAASTQRIGMPCLTLYLTSPSESLGAGSDGPKSHSCTKLSALSQVTPLLTNIEKGRYKVPQTEEPTAKEADLILETEENFKRGVISVIRQMQREVDKIKNIYVSDVLNMKSSLDDLNSLACTIEARVSEQEDAVEGLTKDTMQLAREIVDKERLREREDRFRSSNIRVIGIPEKENRENGAVDIIKEVIEENFAELEDQSLEIVSAHRVPNSVDEHRLTPRHILVKFGSASDKQRVLKASRAKQEITYRGSKIRLTADLSPGTIDARSQWCGIIKILQDEGFQPRILYPAKLAFDFKGKTKIFFDIEEFKKFISDIPYLKDLLNNIH</sequence>
<protein>
    <recommendedName>
        <fullName>LINE-1 type transposase domain-containing protein 1</fullName>
    </recommendedName>
    <alternativeName>
        <fullName>ES cell-associated protein 11</fullName>
    </alternativeName>
</protein>